<keyword id="KW-0002">3D-structure</keyword>
<keyword id="KW-0053">Apoptosis</keyword>
<keyword id="KW-0204">Cytolysis</keyword>
<keyword id="KW-1015">Disulfide bond</keyword>
<keyword id="KW-0325">Glycoprotein</keyword>
<keyword id="KW-0378">Hydrolase</keyword>
<keyword id="KW-0391">Immunity</keyword>
<keyword id="KW-0399">Innate immunity</keyword>
<keyword id="KW-0645">Protease</keyword>
<keyword id="KW-1267">Proteomics identification</keyword>
<keyword id="KW-1185">Reference proteome</keyword>
<keyword id="KW-0964">Secreted</keyword>
<keyword id="KW-0720">Serine protease</keyword>
<keyword id="KW-0732">Signal</keyword>
<keyword id="KW-0865">Zymogen</keyword>
<accession>P51124</accession>
<gene>
    <name type="primary">GZMM</name>
    <name type="synonym">MET1</name>
</gene>
<proteinExistence type="evidence at protein level"/>
<name>GRAM_HUMAN</name>
<comment type="function">
    <text evidence="4 6">Cleaves peptide substrates after methionine, leucine, and norleucine. Physiological substrates include EZR, alpha-tubulins and the apoptosis inhibitor BIRC5/Survivin. Promotes caspase activation and subsequent apoptosis of target cells.</text>
</comment>
<comment type="interaction">
    <interactant intactId="EBI-12119998">
        <id>P51124</id>
    </interactant>
    <interactant intactId="EBI-10251462">
        <id>Q6NX45</id>
        <label>ZNF774</label>
    </interactant>
    <organismsDiffer>false</organismsDiffer>
    <experiments>3</experiments>
</comment>
<comment type="subcellular location">
    <subcellularLocation>
        <location>Secreted</location>
    </subcellularLocation>
    <subcellularLocation>
        <location>Cytoplasmic granule</location>
    </subcellularLocation>
    <text>Granules of large granular lymphocytes.</text>
</comment>
<comment type="tissue specificity">
    <text evidence="4">Highly and constitutively expressed in activated natural killer (NK) cells.</text>
</comment>
<comment type="similarity">
    <text evidence="2">Belongs to the peptidase S1 family. Granzyme subfamily.</text>
</comment>
<reference key="1">
    <citation type="journal article" date="1993" name="J. Immunol.">
        <title>Met-ase: cloning and distinct chromosomal location of a serine protease preferentially expressed in human natural killer cells.</title>
        <authorList>
            <person name="Smyth M.J."/>
            <person name="Sayers T.J."/>
            <person name="Wiltrout T."/>
            <person name="Powers J.C."/>
            <person name="Trapani J.A."/>
        </authorList>
    </citation>
    <scope>NUCLEOTIDE SEQUENCE [MRNA]</scope>
    <scope>VARIANT GLY-221</scope>
</reference>
<reference key="2">
    <citation type="journal article" date="1994" name="Genomics">
        <title>The human Met-ase gene (GZMM): structure, sequence, and close physical linkage to the serine protease gene cluster on 19p13.3.</title>
        <authorList>
            <person name="Pilat D."/>
            <person name="Fink T.M."/>
            <person name="Obermaier-Skrobanek B."/>
            <person name="Zimmer M."/>
            <person name="Wekerle H."/>
            <person name="Lichter P."/>
            <person name="Jenne D.E."/>
        </authorList>
    </citation>
    <scope>NUCLEOTIDE SEQUENCE [GENOMIC DNA]</scope>
    <scope>VARIANT GLY-221</scope>
</reference>
<reference key="3">
    <citation type="journal article" date="2004" name="Nature">
        <title>The DNA sequence and biology of human chromosome 19.</title>
        <authorList>
            <person name="Grimwood J."/>
            <person name="Gordon L.A."/>
            <person name="Olsen A.S."/>
            <person name="Terry A."/>
            <person name="Schmutz J."/>
            <person name="Lamerdin J.E."/>
            <person name="Hellsten U."/>
            <person name="Goodstein D."/>
            <person name="Couronne O."/>
            <person name="Tran-Gyamfi M."/>
            <person name="Aerts A."/>
            <person name="Altherr M."/>
            <person name="Ashworth L."/>
            <person name="Bajorek E."/>
            <person name="Black S."/>
            <person name="Branscomb E."/>
            <person name="Caenepeel S."/>
            <person name="Carrano A.V."/>
            <person name="Caoile C."/>
            <person name="Chan Y.M."/>
            <person name="Christensen M."/>
            <person name="Cleland C.A."/>
            <person name="Copeland A."/>
            <person name="Dalin E."/>
            <person name="Dehal P."/>
            <person name="Denys M."/>
            <person name="Detter J.C."/>
            <person name="Escobar J."/>
            <person name="Flowers D."/>
            <person name="Fotopulos D."/>
            <person name="Garcia C."/>
            <person name="Georgescu A.M."/>
            <person name="Glavina T."/>
            <person name="Gomez M."/>
            <person name="Gonzales E."/>
            <person name="Groza M."/>
            <person name="Hammon N."/>
            <person name="Hawkins T."/>
            <person name="Haydu L."/>
            <person name="Ho I."/>
            <person name="Huang W."/>
            <person name="Israni S."/>
            <person name="Jett J."/>
            <person name="Kadner K."/>
            <person name="Kimball H."/>
            <person name="Kobayashi A."/>
            <person name="Larionov V."/>
            <person name="Leem S.-H."/>
            <person name="Lopez F."/>
            <person name="Lou Y."/>
            <person name="Lowry S."/>
            <person name="Malfatti S."/>
            <person name="Martinez D."/>
            <person name="McCready P.M."/>
            <person name="Medina C."/>
            <person name="Morgan J."/>
            <person name="Nelson K."/>
            <person name="Nolan M."/>
            <person name="Ovcharenko I."/>
            <person name="Pitluck S."/>
            <person name="Pollard M."/>
            <person name="Popkie A.P."/>
            <person name="Predki P."/>
            <person name="Quan G."/>
            <person name="Ramirez L."/>
            <person name="Rash S."/>
            <person name="Retterer J."/>
            <person name="Rodriguez A."/>
            <person name="Rogers S."/>
            <person name="Salamov A."/>
            <person name="Salazar A."/>
            <person name="She X."/>
            <person name="Smith D."/>
            <person name="Slezak T."/>
            <person name="Solovyev V."/>
            <person name="Thayer N."/>
            <person name="Tice H."/>
            <person name="Tsai M."/>
            <person name="Ustaszewska A."/>
            <person name="Vo N."/>
            <person name="Wagner M."/>
            <person name="Wheeler J."/>
            <person name="Wu K."/>
            <person name="Xie G."/>
            <person name="Yang J."/>
            <person name="Dubchak I."/>
            <person name="Furey T.S."/>
            <person name="DeJong P."/>
            <person name="Dickson M."/>
            <person name="Gordon D."/>
            <person name="Eichler E.E."/>
            <person name="Pennacchio L.A."/>
            <person name="Richardson P."/>
            <person name="Stubbs L."/>
            <person name="Rokhsar D.S."/>
            <person name="Myers R.M."/>
            <person name="Rubin E.M."/>
            <person name="Lucas S.M."/>
        </authorList>
    </citation>
    <scope>NUCLEOTIDE SEQUENCE [LARGE SCALE GENOMIC DNA]</scope>
</reference>
<reference key="4">
    <citation type="journal article" date="2004" name="Genome Res.">
        <title>The status, quality, and expansion of the NIH full-length cDNA project: the Mammalian Gene Collection (MGC).</title>
        <authorList>
            <consortium name="The MGC Project Team"/>
        </authorList>
    </citation>
    <scope>NUCLEOTIDE SEQUENCE [LARGE SCALE MRNA]</scope>
    <scope>VARIANT GLY-221</scope>
    <source>
        <tissue>Pancreas</tissue>
        <tissue>Spleen</tissue>
    </source>
</reference>
<reference key="5">
    <citation type="journal article" date="2008" name="J. Immunol.">
        <title>NK cell protease granzyme M targets alpha-tubulin and disorganizes the microtubule network.</title>
        <authorList>
            <person name="Bovenschen N."/>
            <person name="de Koning P.J."/>
            <person name="Quadir R."/>
            <person name="Broekhuizen R."/>
            <person name="Damen J.M."/>
            <person name="Froelich C.J."/>
            <person name="Slijper M."/>
            <person name="Kummer J.A."/>
        </authorList>
    </citation>
    <scope>FUNCTION</scope>
    <scope>TISSUE SPECIFICITY</scope>
    <scope>SUBSTRATES</scope>
</reference>
<reference key="6">
    <citation type="journal article" date="2010" name="J. Biol. Chem.">
        <title>Cleavage of survivin by Granzyme M triggers degradation of the survivin-X-linked inhibitor of apoptosis protein (XIAP) complex to free caspase activity leading to cytolysis of target tumor cells.</title>
        <authorList>
            <person name="Hu D."/>
            <person name="Liu S."/>
            <person name="Shi L."/>
            <person name="Li C."/>
            <person name="Wu L."/>
            <person name="Fan Z."/>
        </authorList>
    </citation>
    <scope>FUNCTION</scope>
</reference>
<reference key="7">
    <citation type="journal article" date="2009" name="J. Immunol.">
        <title>Structural basis for proteolytic specificity of the human apoptosis-inducing granzyme M.</title>
        <authorList>
            <person name="Wu L."/>
            <person name="Wang L."/>
            <person name="Hua G."/>
            <person name="Liu K."/>
            <person name="Yang X."/>
            <person name="Zhai Y."/>
            <person name="Bartlam M."/>
            <person name="Sun F."/>
            <person name="Fan Z."/>
        </authorList>
    </citation>
    <scope>X-RAY CRYSTALLOGRAPHY (1.96 ANGSTROMS) OF 26-257</scope>
    <scope>ACTIVE SITE</scope>
    <scope>DISULFIDE BONDS</scope>
</reference>
<protein>
    <recommendedName>
        <fullName>Granzyme M</fullName>
        <ecNumber>3.4.21.-</ecNumber>
    </recommendedName>
    <alternativeName>
        <fullName>Met-1 serine protease</fullName>
        <shortName>Hu-Met-1</shortName>
    </alternativeName>
    <alternativeName>
        <fullName>Met-ase</fullName>
    </alternativeName>
    <alternativeName>
        <fullName>Natural killer cell granular protease</fullName>
    </alternativeName>
</protein>
<organism>
    <name type="scientific">Homo sapiens</name>
    <name type="common">Human</name>
    <dbReference type="NCBI Taxonomy" id="9606"/>
    <lineage>
        <taxon>Eukaryota</taxon>
        <taxon>Metazoa</taxon>
        <taxon>Chordata</taxon>
        <taxon>Craniata</taxon>
        <taxon>Vertebrata</taxon>
        <taxon>Euteleostomi</taxon>
        <taxon>Mammalia</taxon>
        <taxon>Eutheria</taxon>
        <taxon>Euarchontoglires</taxon>
        <taxon>Primates</taxon>
        <taxon>Haplorrhini</taxon>
        <taxon>Catarrhini</taxon>
        <taxon>Hominidae</taxon>
        <taxon>Homo</taxon>
    </lineage>
</organism>
<dbReference type="EC" id="3.4.21.-"/>
<dbReference type="EMBL" id="L23134">
    <property type="protein sequence ID" value="AAA59582.1"/>
    <property type="molecule type" value="mRNA"/>
</dbReference>
<dbReference type="EMBL" id="L36922">
    <property type="protein sequence ID" value="AAA57262.1"/>
    <property type="molecule type" value="Genomic_DNA"/>
</dbReference>
<dbReference type="EMBL" id="L36936">
    <property type="protein sequence ID" value="AAA57257.1"/>
    <property type="molecule type" value="Genomic_DNA"/>
</dbReference>
<dbReference type="EMBL" id="AC011556">
    <property type="status" value="NOT_ANNOTATED_CDS"/>
    <property type="molecule type" value="Genomic_DNA"/>
</dbReference>
<dbReference type="EMBL" id="BC025701">
    <property type="protein sequence ID" value="AAH25701.1"/>
    <property type="molecule type" value="mRNA"/>
</dbReference>
<dbReference type="CCDS" id="CCDS12031.1"/>
<dbReference type="PIR" id="A55634">
    <property type="entry name" value="A55634"/>
</dbReference>
<dbReference type="RefSeq" id="NP_001245280.1">
    <property type="nucleotide sequence ID" value="NM_001258351.1"/>
</dbReference>
<dbReference type="RefSeq" id="NP_005308.2">
    <property type="nucleotide sequence ID" value="NM_005317.4"/>
</dbReference>
<dbReference type="PDB" id="2ZGC">
    <property type="method" value="X-ray"/>
    <property type="resolution" value="1.96 A"/>
    <property type="chains" value="A=26-257"/>
</dbReference>
<dbReference type="PDB" id="2ZGH">
    <property type="method" value="X-ray"/>
    <property type="resolution" value="2.17 A"/>
    <property type="chains" value="A=26-257"/>
</dbReference>
<dbReference type="PDB" id="2ZGJ">
    <property type="method" value="X-ray"/>
    <property type="resolution" value="2.30 A"/>
    <property type="chains" value="A=26-257"/>
</dbReference>
<dbReference type="PDB" id="2ZKS">
    <property type="method" value="X-ray"/>
    <property type="resolution" value="2.70 A"/>
    <property type="chains" value="A=26-257"/>
</dbReference>
<dbReference type="PDBsum" id="2ZGC"/>
<dbReference type="PDBsum" id="2ZGH"/>
<dbReference type="PDBsum" id="2ZGJ"/>
<dbReference type="PDBsum" id="2ZKS"/>
<dbReference type="SMR" id="P51124"/>
<dbReference type="BioGRID" id="109259">
    <property type="interactions" value="9"/>
</dbReference>
<dbReference type="FunCoup" id="P51124">
    <property type="interactions" value="89"/>
</dbReference>
<dbReference type="IntAct" id="P51124">
    <property type="interactions" value="1"/>
</dbReference>
<dbReference type="STRING" id="9606.ENSP00000264553"/>
<dbReference type="ChEMBL" id="CHEMBL4523234"/>
<dbReference type="MEROPS" id="S01.139"/>
<dbReference type="CarbonylDB" id="P51124"/>
<dbReference type="GlyCosmos" id="P51124">
    <property type="glycosylation" value="1 site, No reported glycans"/>
</dbReference>
<dbReference type="GlyGen" id="P51124">
    <property type="glycosylation" value="2 sites"/>
</dbReference>
<dbReference type="iPTMnet" id="P51124"/>
<dbReference type="PhosphoSitePlus" id="P51124"/>
<dbReference type="BioMuta" id="GZMM"/>
<dbReference type="DMDM" id="296434527"/>
<dbReference type="MassIVE" id="P51124"/>
<dbReference type="PaxDb" id="9606-ENSP00000264553"/>
<dbReference type="PeptideAtlas" id="P51124"/>
<dbReference type="ProteomicsDB" id="56282"/>
<dbReference type="Antibodypedia" id="22316">
    <property type="antibodies" value="176 antibodies from 33 providers"/>
</dbReference>
<dbReference type="DNASU" id="3004"/>
<dbReference type="Ensembl" id="ENST00000264553.6">
    <property type="protein sequence ID" value="ENSP00000264553.1"/>
    <property type="gene ID" value="ENSG00000197540.8"/>
</dbReference>
<dbReference type="GeneID" id="3004"/>
<dbReference type="KEGG" id="hsa:3004"/>
<dbReference type="MANE-Select" id="ENST00000264553.6">
    <property type="protein sequence ID" value="ENSP00000264553.1"/>
    <property type="RefSeq nucleotide sequence ID" value="NM_005317.4"/>
    <property type="RefSeq protein sequence ID" value="NP_005308.2"/>
</dbReference>
<dbReference type="UCSC" id="uc002low.3">
    <property type="organism name" value="human"/>
</dbReference>
<dbReference type="AGR" id="HGNC:4712"/>
<dbReference type="CTD" id="3004"/>
<dbReference type="DisGeNET" id="3004"/>
<dbReference type="GeneCards" id="GZMM"/>
<dbReference type="HGNC" id="HGNC:4712">
    <property type="gene designation" value="GZMM"/>
</dbReference>
<dbReference type="HPA" id="ENSG00000197540">
    <property type="expression patterns" value="Tissue enhanced (bone marrow, lymphoid tissue)"/>
</dbReference>
<dbReference type="MIM" id="600311">
    <property type="type" value="gene"/>
</dbReference>
<dbReference type="neXtProt" id="NX_P51124"/>
<dbReference type="OpenTargets" id="ENSG00000197540"/>
<dbReference type="PharmGKB" id="PA29090"/>
<dbReference type="VEuPathDB" id="HostDB:ENSG00000197540"/>
<dbReference type="eggNOG" id="KOG3627">
    <property type="taxonomic scope" value="Eukaryota"/>
</dbReference>
<dbReference type="GeneTree" id="ENSGT00940000162161"/>
<dbReference type="HOGENOM" id="CLU_006842_1_0_1"/>
<dbReference type="InParanoid" id="P51124"/>
<dbReference type="OMA" id="DPFKPPV"/>
<dbReference type="OrthoDB" id="5597713at2759"/>
<dbReference type="PAN-GO" id="P51124">
    <property type="GO annotations" value="0 GO annotations based on evolutionary models"/>
</dbReference>
<dbReference type="PhylomeDB" id="P51124"/>
<dbReference type="TreeFam" id="TF335738"/>
<dbReference type="BRENDA" id="3.4.21.78">
    <property type="organism ID" value="2681"/>
</dbReference>
<dbReference type="BRENDA" id="3.4.21.B2">
    <property type="organism ID" value="2681"/>
</dbReference>
<dbReference type="PathwayCommons" id="P51124"/>
<dbReference type="Reactome" id="R-HSA-173736">
    <property type="pathway name" value="Alternative complement activation"/>
</dbReference>
<dbReference type="SignaLink" id="P51124"/>
<dbReference type="BioGRID-ORCS" id="3004">
    <property type="hits" value="19 hits in 1148 CRISPR screens"/>
</dbReference>
<dbReference type="EvolutionaryTrace" id="P51124"/>
<dbReference type="GeneWiki" id="GZMM"/>
<dbReference type="GenomeRNAi" id="3004"/>
<dbReference type="Pharos" id="P51124">
    <property type="development level" value="Tbio"/>
</dbReference>
<dbReference type="PRO" id="PR:P51124"/>
<dbReference type="Proteomes" id="UP000005640">
    <property type="component" value="Chromosome 19"/>
</dbReference>
<dbReference type="RNAct" id="P51124">
    <property type="molecule type" value="protein"/>
</dbReference>
<dbReference type="Bgee" id="ENSG00000197540">
    <property type="expression patterns" value="Expressed in granulocyte and 103 other cell types or tissues"/>
</dbReference>
<dbReference type="ExpressionAtlas" id="P51124">
    <property type="expression patterns" value="baseline and differential"/>
</dbReference>
<dbReference type="GO" id="GO:0005615">
    <property type="term" value="C:extracellular space"/>
    <property type="evidence" value="ECO:0000318"/>
    <property type="project" value="GO_Central"/>
</dbReference>
<dbReference type="GO" id="GO:0016020">
    <property type="term" value="C:membrane"/>
    <property type="evidence" value="ECO:0007005"/>
    <property type="project" value="UniProtKB"/>
</dbReference>
<dbReference type="GO" id="GO:0004252">
    <property type="term" value="F:serine-type endopeptidase activity"/>
    <property type="evidence" value="ECO:0000315"/>
    <property type="project" value="UniProtKB"/>
</dbReference>
<dbReference type="GO" id="GO:0008236">
    <property type="term" value="F:serine-type peptidase activity"/>
    <property type="evidence" value="ECO:0000304"/>
    <property type="project" value="ProtInc"/>
</dbReference>
<dbReference type="GO" id="GO:0006915">
    <property type="term" value="P:apoptotic process"/>
    <property type="evidence" value="ECO:0000315"/>
    <property type="project" value="UniProtKB"/>
</dbReference>
<dbReference type="GO" id="GO:0045087">
    <property type="term" value="P:innate immune response"/>
    <property type="evidence" value="ECO:0007669"/>
    <property type="project" value="UniProtKB-KW"/>
</dbReference>
<dbReference type="GO" id="GO:0031640">
    <property type="term" value="P:killing of cells of another organism"/>
    <property type="evidence" value="ECO:0007669"/>
    <property type="project" value="UniProtKB-KW"/>
</dbReference>
<dbReference type="GO" id="GO:0051604">
    <property type="term" value="P:protein maturation"/>
    <property type="evidence" value="ECO:0000318"/>
    <property type="project" value="GO_Central"/>
</dbReference>
<dbReference type="GO" id="GO:0006508">
    <property type="term" value="P:proteolysis"/>
    <property type="evidence" value="ECO:0007669"/>
    <property type="project" value="UniProtKB-KW"/>
</dbReference>
<dbReference type="GO" id="GO:0001913">
    <property type="term" value="P:T cell mediated cytotoxicity"/>
    <property type="evidence" value="ECO:0007669"/>
    <property type="project" value="Ensembl"/>
</dbReference>
<dbReference type="CDD" id="cd00190">
    <property type="entry name" value="Tryp_SPc"/>
    <property type="match status" value="1"/>
</dbReference>
<dbReference type="FunFam" id="2.40.10.10:FF:000146">
    <property type="entry name" value="Serine protease 53"/>
    <property type="match status" value="1"/>
</dbReference>
<dbReference type="Gene3D" id="2.40.10.10">
    <property type="entry name" value="Trypsin-like serine proteases"/>
    <property type="match status" value="2"/>
</dbReference>
<dbReference type="InterPro" id="IPR009003">
    <property type="entry name" value="Peptidase_S1_PA"/>
</dbReference>
<dbReference type="InterPro" id="IPR043504">
    <property type="entry name" value="Peptidase_S1_PA_chymotrypsin"/>
</dbReference>
<dbReference type="InterPro" id="IPR001314">
    <property type="entry name" value="Peptidase_S1A"/>
</dbReference>
<dbReference type="InterPro" id="IPR001254">
    <property type="entry name" value="Trypsin_dom"/>
</dbReference>
<dbReference type="InterPro" id="IPR018114">
    <property type="entry name" value="TRYPSIN_HIS"/>
</dbReference>
<dbReference type="InterPro" id="IPR033116">
    <property type="entry name" value="TRYPSIN_SER"/>
</dbReference>
<dbReference type="PANTHER" id="PTHR24271:SF51">
    <property type="entry name" value="GRANZYME M"/>
    <property type="match status" value="1"/>
</dbReference>
<dbReference type="PANTHER" id="PTHR24271">
    <property type="entry name" value="KALLIKREIN-RELATED"/>
    <property type="match status" value="1"/>
</dbReference>
<dbReference type="Pfam" id="PF00089">
    <property type="entry name" value="Trypsin"/>
    <property type="match status" value="1"/>
</dbReference>
<dbReference type="PRINTS" id="PR00722">
    <property type="entry name" value="CHYMOTRYPSIN"/>
</dbReference>
<dbReference type="SMART" id="SM00020">
    <property type="entry name" value="Tryp_SPc"/>
    <property type="match status" value="1"/>
</dbReference>
<dbReference type="SUPFAM" id="SSF50494">
    <property type="entry name" value="Trypsin-like serine proteases"/>
    <property type="match status" value="1"/>
</dbReference>
<dbReference type="PROSITE" id="PS50240">
    <property type="entry name" value="TRYPSIN_DOM"/>
    <property type="match status" value="1"/>
</dbReference>
<dbReference type="PROSITE" id="PS00134">
    <property type="entry name" value="TRYPSIN_HIS"/>
    <property type="match status" value="1"/>
</dbReference>
<dbReference type="PROSITE" id="PS00135">
    <property type="entry name" value="TRYPSIN_SER"/>
    <property type="match status" value="1"/>
</dbReference>
<feature type="signal peptide" evidence="1">
    <location>
        <begin position="1"/>
        <end position="23"/>
    </location>
</feature>
<feature type="propeptide" id="PRO_0000027421" description="Activation peptide" evidence="1">
    <location>
        <begin position="24"/>
        <end position="25"/>
    </location>
</feature>
<feature type="chain" id="PRO_0000027422" description="Granzyme M">
    <location>
        <begin position="26"/>
        <end position="257"/>
    </location>
</feature>
<feature type="domain" description="Peptidase S1" evidence="2">
    <location>
        <begin position="26"/>
        <end position="254"/>
    </location>
</feature>
<feature type="active site" description="Charge relay system" evidence="5">
    <location>
        <position position="66"/>
    </location>
</feature>
<feature type="active site" description="Charge relay system" evidence="5">
    <location>
        <position position="111"/>
    </location>
</feature>
<feature type="active site" description="Charge relay system" evidence="5">
    <location>
        <position position="207"/>
    </location>
</feature>
<feature type="glycosylation site" description="N-linked (GlcNAc...) asparagine" evidence="1">
    <location>
        <position position="177"/>
    </location>
</feature>
<feature type="disulfide bond" evidence="2 5">
    <location>
        <begin position="51"/>
        <end position="67"/>
    </location>
</feature>
<feature type="disulfide bond" evidence="2 5">
    <location>
        <begin position="145"/>
        <end position="213"/>
    </location>
</feature>
<feature type="disulfide bond" evidence="2 5">
    <location>
        <begin position="176"/>
        <end position="192"/>
    </location>
</feature>
<feature type="disulfide bond" evidence="2 5">
    <location>
        <begin position="203"/>
        <end position="230"/>
    </location>
</feature>
<feature type="sequence variant" id="VAR_051829" description="In dbSNP:rs1599882." evidence="3 7 8">
    <original>R</original>
    <variation>G</variation>
    <location>
        <position position="221"/>
    </location>
</feature>
<feature type="strand" evidence="9">
    <location>
        <begin position="40"/>
        <end position="45"/>
    </location>
</feature>
<feature type="strand" evidence="9">
    <location>
        <begin position="48"/>
        <end position="57"/>
    </location>
</feature>
<feature type="strand" evidence="9">
    <location>
        <begin position="60"/>
        <end position="63"/>
    </location>
</feature>
<feature type="helix" evidence="9">
    <location>
        <begin position="65"/>
        <end position="68"/>
    </location>
</feature>
<feature type="helix" evidence="9">
    <location>
        <begin position="72"/>
        <end position="74"/>
    </location>
</feature>
<feature type="strand" evidence="9">
    <location>
        <begin position="75"/>
        <end position="80"/>
    </location>
</feature>
<feature type="strand" evidence="9">
    <location>
        <begin position="82"/>
        <end position="86"/>
    </location>
</feature>
<feature type="strand" evidence="9">
    <location>
        <begin position="89"/>
        <end position="98"/>
    </location>
</feature>
<feature type="turn" evidence="10">
    <location>
        <begin position="105"/>
        <end position="107"/>
    </location>
</feature>
<feature type="strand" evidence="9">
    <location>
        <begin position="113"/>
        <end position="119"/>
    </location>
</feature>
<feature type="strand" evidence="9">
    <location>
        <begin position="144"/>
        <end position="149"/>
    </location>
</feature>
<feature type="strand" evidence="9">
    <location>
        <begin position="152"/>
        <end position="154"/>
    </location>
</feature>
<feature type="strand" evidence="9">
    <location>
        <begin position="164"/>
        <end position="170"/>
    </location>
</feature>
<feature type="helix" evidence="9">
    <location>
        <begin position="173"/>
        <end position="176"/>
    </location>
</feature>
<feature type="turn" evidence="9">
    <location>
        <begin position="179"/>
        <end position="184"/>
    </location>
</feature>
<feature type="strand" evidence="9">
    <location>
        <begin position="190"/>
        <end position="194"/>
    </location>
</feature>
<feature type="strand" evidence="9">
    <location>
        <begin position="210"/>
        <end position="213"/>
    </location>
</feature>
<feature type="turn" evidence="9">
    <location>
        <begin position="214"/>
        <end position="217"/>
    </location>
</feature>
<feature type="strand" evidence="9">
    <location>
        <begin position="218"/>
        <end position="223"/>
    </location>
</feature>
<feature type="strand" evidence="9">
    <location>
        <begin position="238"/>
        <end position="242"/>
    </location>
</feature>
<feature type="helix" evidence="9">
    <location>
        <begin position="243"/>
        <end position="245"/>
    </location>
</feature>
<feature type="helix" evidence="9">
    <location>
        <begin position="246"/>
        <end position="253"/>
    </location>
</feature>
<evidence type="ECO:0000255" key="1"/>
<evidence type="ECO:0000255" key="2">
    <source>
        <dbReference type="PROSITE-ProRule" id="PRU00274"/>
    </source>
</evidence>
<evidence type="ECO:0000269" key="3">
    <source>
    </source>
</evidence>
<evidence type="ECO:0000269" key="4">
    <source>
    </source>
</evidence>
<evidence type="ECO:0000269" key="5">
    <source>
    </source>
</evidence>
<evidence type="ECO:0000269" key="6">
    <source>
    </source>
</evidence>
<evidence type="ECO:0000269" key="7">
    <source>
    </source>
</evidence>
<evidence type="ECO:0000269" key="8">
    <source>
    </source>
</evidence>
<evidence type="ECO:0007829" key="9">
    <source>
        <dbReference type="PDB" id="2ZGC"/>
    </source>
</evidence>
<evidence type="ECO:0007829" key="10">
    <source>
        <dbReference type="PDB" id="2ZGJ"/>
    </source>
</evidence>
<sequence length="257" mass="27545">MEACVSSLLVLALGALSVGSSFGTQIIGGREVIPHSRPYMASLQRNGSHLCGGVLVHPKWVLTAAHCLAQRMAQLRLVLGLHTLDSPGLTFHIKAAIQHPRYKPVPALENDLALLQLDGKVKPSRTIRPLALPSKRQVVAAGTRCSMAGWGLTHQGGRLSRVLRELDLQVLDTRMCNNSRFWNGSLSPSMVCLAADSKDQAPCKGDSGGPLVCGKGRVLARVLSFSSRVCTDIFKPPVATAVAPYVSWIRKVTGRSA</sequence>